<keyword id="KW-0067">ATP-binding</keyword>
<keyword id="KW-0175">Coiled coil</keyword>
<keyword id="KW-0963">Cytoplasm</keyword>
<keyword id="KW-0206">Cytoskeleton</keyword>
<keyword id="KW-0243">Dynein</keyword>
<keyword id="KW-0880">Kelch repeat</keyword>
<keyword id="KW-0477">Merozoite</keyword>
<keyword id="KW-0493">Microtubule</keyword>
<keyword id="KW-0505">Motor protein</keyword>
<keyword id="KW-0547">Nucleotide-binding</keyword>
<keyword id="KW-1185">Reference proteome</keyword>
<keyword id="KW-0677">Repeat</keyword>
<sequence length="5251" mass="617381">MTKFSEGHYDILNLIEVKSNIQEKNILGYSIDYTVGGLFLFGGFKIDIEENNGIICNDAYLIHIKNDKAEYETLSIKIKPSIRCYHNSCTLLENYVIIFGGLNSEVPFVALNDLWVFNSLNKTFVEIKLKCKEKNKEKNLQNGINGTNEKGYISQTDDENCSDNKYGENQDYGSNDSDSKDGEDIDKDDSILDNSYVKNLRKYLKSNKSDELHSSDIPCPRYFSSLDLYIIRKNNIEEEKGFKKDEIKIIKNNIIVSNSLNYEYFSLILFGGYGGYDRSSYNDLYEFNILNNEWILRGCKGNVPSTRYGHISFIHGNNLFILGGTNAEISFNDMYSCDLKNNEWSEVDFSYSFNISKVFCRSVLVESIDRNIIFIFGGYNIISDEKGNRKIEYNNIELNMLKLYDTFKLEELKYNIIQNNEENIIKNNNMEEINNMNSNNVKNEIISTKHDIYEDSNISNNITFCSITYDFMDSNLIITDNKKKIYIMNISNIIGPKYAIFNIWPKQCDINGNKKLLFRGKGFTNEGKILVKYKSDDINLYSEGIYINENNIYTIVPNAKNKIKNNICQVQLSINDKCYTTNSCFLEYYYNIDPKNTLIFGSGLLEPVCLQKDNIFFLIAKNSLNEHKKIGGDKFQISIIYEQKSEQYDIKYFVYDLNNGFYIVKYFSFLNDKQMKVKMQNVGKNNNIEQRNNNNDNNDNNNNDNNNNNNNDNNNNNNNNNNNNNNNNDNLNEQLNCNVVQRKNQNDLETLEGPQNISNKNSMNNEDIKSNTNNHMEILDLNGTLKITVKLKDENIQNSPFFLKVDNNLKDKIIYVKQFINDRLENLLRKGECLFDLIKNKNMNTNNLIQLNINIDHFLNTFPKAIHDINIIEQYILYGLIDIDKIKNVITNLHEEDNLVNASQEEEIYIDKEIHELINNEKFKNDQTDEMGEYTATTTNNVKHTNNTNNNDTHITDTLTHINENNDTRNNFLKVKDNHKIVDFINENKLKFLDYIDPNIMKKLRNYINLLNTEELNLKNKKDNKKIDDSNKKDLLGIKKKRSEDKFHLDNNLEKDEKKIEVIKNLLIFYHKLKTVCLSKKEKELKDEFIKEEKESIKKLKLNYNKFVNIKKNLEVSNVYLHNNGYDSSLKELETTKKYLIEIKDEVTKIKQISDNIIKIDNVEELNKDIENLNNEIHEIEKMWLFIKKKEEILNEFFFCPFKDLDVEDFDIQIKKLQNDFKKIKVDRKHNICKEETLKLKEIIKFISVLCEIKKPFIKDRHIKEMENNINEEKEKNKEEDKINIIIDDSTLTIYFYKLNIMKYHDTIEEVIIKAYNEKIIEETINKFEDYWDKIYFKKKEYKNNILLTYIDDICIDTIEEHQVTLQNCFSSKYFLFFSDELNLWQKKISNIYEVIQLLKDIEKLWIYLQNMYIYSEEVKKELPLYSKFFLTINDEYLEMLKQIIDNNIKVVDFSNEGGIIEKLEELKVKLCKSEKPLNEYLDSKRKSFPRFFFISSTDLIDILSNGNNFKLVNTHVQKIFLSIRKFVTKNEQLTDNEIQNEVKLNNQETITEEKNKNANENSNEIETNKYNKKEELTNNRDGDGDDDDNIKNDKDEKDEKEETIIKLISSYGEEICNFHEGLVLKGKVECYLNDIIDHIKYTLKYYITNLFRLKDLFNNEKEKWIDENYLAQVFILCNTIFFVNDVENILIKKDINIYEELNKYYKNHILQLENVIKKVQKKLTIKNRIKIMCIITLDTFYRDVLEVILKNKSSISINMFDWQSQIRMYPFFKNQKIYEQNENQTEESNLKLDNKNLDNEHQEGKQEYNNKNNDNDNNNNNNNNNILNNELSKYTCLTHFKDLYIKIKIMDCSFNYSYDYIGNYQRLVITPLTSRIYITATQALSLYMGCAPAGPAGTGKTETTKDLSSFFGKNCYVFNCSDQLDYKSMGNIFKGIGSTGCWCCFDEFNRLIPEVLSVCSIQFKSILDCKRNNNNVCIIGSDEIIVKKNCAVFITMNPDYLGRSKLPESLKILFRPITVIIPDFNKICENMLMAEGYVNAKYLSIKFTTFFELAKSLLKDKHCDWGLRSIKSVLTKAGDLKRNYPDVDENKLLYSAIHDINIAKISSSNCPIFSGLLNDIFFSNQNDITDINDINDINENKKEKDNIEELKSDNVKEEKKTKKKHLEDNNNNKKKELFNLNNIEKELMDICKKNHLFGLNYFVKKIIQLNDIMNIRHCVFIMGEAGCGKTTLFNMLMEYQKKQNLKTVSIRINPKSINIDDLYGNVHIKTREWKDGVFSKYMRNYSKKDDCDKAYIIFDGNLDSHWIENMNSVMDDNKVLTLSSNERILLKNHMNLVFEFSDLMFATPATISRAGLVYFSVDPNDLWKNYFLSWIDKHDNFNSNIKKLFEKLMYKYVEPTFSYLSTLQTSIKISPMSHIQSLSALLDILLIDNNYESVEHYFIYSVIWCFGGFLGEKDNVNYKKSFDKYWKNTFKSIKVNRKISVFDFYVENNKFKEWDEAEITNELKQNYVLQDDIFIETIESYSYKYICKLFLKSDMPILFIGKTGVGKTQLCKKILNEEKEEFKSFYMIFNYYTTSKNVQTLMQSCLEKKSGKQFSPPYQQKLIYFIDDINMPKCDDYNTQSAIELLCQYIDTNSWFDLEKLNLIKILNTKLISCMNYNRGNFTINPRLIRHFFILNINFPENNTVNSIFSVLLKNHFNNFKQDVSDLIPSILKSTISLFYNIEKTFKRTATYFYYEFNLRDIHSIVKGLLTTTPVTFQDCDKLLFLWLHECERVYSDKLNKKDKNKYKKIITDIIKKMYNKYEINKFVMKYDSTLLFSNFHKGSHDKTYDICKNMEELTLFLNEELNEYNNSYNVNIVLFSDAIKHICKLIRIVDNLKAHALLLGIGGCGKTTISKFSSYISSKTFFEMDFSAHCTDNDIKKYLQNIFHKCAMKNEDIVLFLKESKIHDTFFIYVNEYMCSNNIIDLYTKEERDYIIHNIRNIAKADGIEQSDNNIFDYYIKKVNDNLHFILCFSPTSNNFRDKSNNFQCILNNTMIDIYDNWEADSLMCVGKNYVSNIYMNINTGDILLDQEYINLKNKNIEKDITLGNKQIEKNYIPTISTNDGDDHYKDMDKTNMKNGDITTTINNIPIDNNNNNNNNRDNIDGNNFFKNREGNDENMKRKVYSNNFTNQNDLNTNITNNNNNNSNNNNNNIYDKNDSILKEEEYVNLKDIITEYLKECYEDLLDISSFYYSHERSHIYITPKLYLESIKTYHIMLLKNITNINNKMNMLKNGITKMNETSSNVENIKNCLKDKKKISEEKMEAAEKYAIDIGNEKMVVKKESDLADIEEQNCLEIQKKVLKQQEECENDIRLGIPLIEQAEEALNTLNKKNIQELKTLNKPPPGVEDITAAVMQLLATIDTTISIDKFGKIKDRSWKSAQKMMINPEKFISLLKDYKNKIDENLVPDCNFKYVENLINLPHFNKNAIQKKSKAAAGLAEWVLNITSFYKIIQNILPKRILLDNTKKGLEEANEKLQIVREKVQSLKAKLSELISQYDHAIYERDLVILEEKKLKTKLELSIRLIDALSSEEISWSKQYESLKKKKKTILTDILLSSTFVTFCGGFTKKYRNKIMTNCVDTLKRKNEIQNNIFNNMLKKINNNDQNFINNNNNNNSSNNNSTNFGYNEDPQKKDNHNNFDISNKLNIKNEKKDNELGNDNLKKEEMIYDIFLVNNFNLDLLINEEVLSKLSKQGLTLNSVCIENNIILENSDKFPIIIDPQMESLKWLINSHKEKSEKLIITDINDKILLKKIEECISFGYSIIVENADEYIDNTLYNVISKNIIKRKNNYYININDKELMFHPSFYIILHTQLSNPHYQPEIQSACSLINFTVTPDDLEEHLLSITLENEFNHLSKKKKKLSLLKYDYMCQLSFLQSSILQKLTDAKGDILEDVSLIENLEKTKLLSENIAKKTEIVKNTEVHINTIINLYRPLSKRGVMYFFILQKLKNLHSFYFYSLEIFLKIFIKCLNDSSPNRSPSKVNQEQEYYLKSEDNDFNDDYLGSTKEEEKMEDEEKMEEEKVDEEKMEEEKVDEEKMEDEKVEEKMEEEKVVEENTEDEKAIEINTEDEKAVEKNTEDEKAVEKNTEDEKAIEKNTEDEKAVEKNTEDEKAVEKNTEDEKAIEKNTEDEKAVEKNTEDEKAVEQNTEDEKVVEENTEDEKAVEKNTEDEKAVEKNTEDEKVVEEKIEDEKGEEQKAEEENVGIEEVEKVQIDDYKVSEKKGENKNCTYEENGKIDKDKEDDLEEEEDFENDDFTNEETKIDKNEVEKRVNMLTDLLNIKMWMYMDKGLLERDKLIVKCLIMLHLEKLNDKISEEEEEIFINPKYKLSNNNITSIRNKKENESMEKKLMNKSFINEELYEDCKNLENLKDFENITESFESESMSWKQWFLSEKVENEELPRKYNNIKDFSKLLLIRVLRKDRFLIALKNYITKNIKMTNDEKNNTYALENILDEYIDNKTPVLFLLTTGYDPSKEIEDYINKMKNNAIKKNDSNKKESNKNNIAYVNISMGQGQENIALKYLKEISKCGGYIFLQNIHLMTKWLKEFEEILDKIFLDAHVNFRLFLSAAIPNEKDTKLLPEKLLKKCFRINNEKSYSLKDNIKCCLDKFENGQYDDKLKTVILGLSYYHSLLLGRFLYGKIGFSQSYSFNDNDLEISFNIIKRYLKTYESFPLADVLFLIGEIIYGGHITDIWDRRINKTYVKNILKEIYRNIISINEKNKNINMDFHHPNDSNNNYNDDDNNNSHKNNKNNNNNNNKDDDDESNNSNDNEEENEEKLILKNTKHNILFDVFKFPDCSKYNINQLKKYIDEKLNKEQTYLLGLHINAEIEYMKNECSRILQTLQELSNKEIASTESYKKNTKIIKKEKPGDNKDNKYTHDQKKETIHKEEDDEDEKHSGSNKSTKIIYDIINHLLNELPDKIDTNDLKIEDSQTNTFMVIALKEAEKFNKLIECINDTLIEIKLVLDGILNMNDKIQNTIKSLMLHNIPHIWINYSYPSKKKLMPWFENFKLRIIFIKEWISKIRNNIFLPNSVWLSALFNPISFLTAIKQKFAQENKVPIDKLKLKWQVTNITKLEDLNNKNNALYIHGLYLQGASWFINSKNDTFTFDKDNINDNVSYGNIIESVPKHIYYSMPLIYVYCISNEQDELLKENMEYRSLDTPLYVTSDRGNTFVCSIDLNLEMEDIEDKWILAGVALFLSDD</sequence>
<evidence type="ECO:0000250" key="1"/>
<evidence type="ECO:0000250" key="2">
    <source>
        <dbReference type="UniProtKB" id="Q14204"/>
    </source>
</evidence>
<evidence type="ECO:0000255" key="3"/>
<evidence type="ECO:0000255" key="4">
    <source>
        <dbReference type="PROSITE-ProRule" id="PRU00499"/>
    </source>
</evidence>
<evidence type="ECO:0000256" key="5">
    <source>
        <dbReference type="SAM" id="MobiDB-lite"/>
    </source>
</evidence>
<evidence type="ECO:0000269" key="6">
    <source>
    </source>
</evidence>
<evidence type="ECO:0000303" key="7">
    <source>
    </source>
</evidence>
<evidence type="ECO:0000305" key="8"/>
<name>DYHC2_PLAF7</name>
<gene>
    <name type="ORF">PF11_0240</name>
    <name type="ORF">PF3D7_1122900</name>
</gene>
<reference key="1">
    <citation type="journal article" date="2002" name="Nature">
        <title>Genome sequence of the human malaria parasite Plasmodium falciparum.</title>
        <authorList>
            <person name="Gardner M.J."/>
            <person name="Hall N."/>
            <person name="Fung E."/>
            <person name="White O."/>
            <person name="Berriman M."/>
            <person name="Hyman R.W."/>
            <person name="Carlton J.M."/>
            <person name="Pain A."/>
            <person name="Nelson K.E."/>
            <person name="Bowman S."/>
            <person name="Paulsen I.T."/>
            <person name="James K.D."/>
            <person name="Eisen J.A."/>
            <person name="Rutherford K.M."/>
            <person name="Salzberg S.L."/>
            <person name="Craig A."/>
            <person name="Kyes S."/>
            <person name="Chan M.-S."/>
            <person name="Nene V."/>
            <person name="Shallom S.J."/>
            <person name="Suh B."/>
            <person name="Peterson J."/>
            <person name="Angiuoli S."/>
            <person name="Pertea M."/>
            <person name="Allen J."/>
            <person name="Selengut J."/>
            <person name="Haft D."/>
            <person name="Mather M.W."/>
            <person name="Vaidya A.B."/>
            <person name="Martin D.M.A."/>
            <person name="Fairlamb A.H."/>
            <person name="Fraunholz M.J."/>
            <person name="Roos D.S."/>
            <person name="Ralph S.A."/>
            <person name="McFadden G.I."/>
            <person name="Cummings L.M."/>
            <person name="Subramanian G.M."/>
            <person name="Mungall C."/>
            <person name="Venter J.C."/>
            <person name="Carucci D.J."/>
            <person name="Hoffman S.L."/>
            <person name="Newbold C."/>
            <person name="Davis R.W."/>
            <person name="Fraser C.M."/>
            <person name="Barrell B.G."/>
        </authorList>
    </citation>
    <scope>NUCLEOTIDE SEQUENCE [LARGE SCALE GENOMIC DNA]</scope>
    <source>
        <strain>3D7</strain>
    </source>
</reference>
<reference evidence="8" key="2">
    <citation type="journal article" date="2007" name="PLoS ONE">
        <title>Rapid identification of malaria vaccine candidates based on alpha-helical coiled coil protein motif.</title>
        <authorList>
            <person name="Villard V."/>
            <person name="Agak G.W."/>
            <person name="Frank G."/>
            <person name="Jafarshad A."/>
            <person name="Servis C."/>
            <person name="Nebie I."/>
            <person name="Sirima S.B."/>
            <person name="Felger I."/>
            <person name="Arevalo-Herrera M."/>
            <person name="Herrera S."/>
            <person name="Heitz F."/>
            <person name="Baecker V."/>
            <person name="Druilhe P."/>
            <person name="Kajava A.V."/>
            <person name="Corradin G."/>
        </authorList>
    </citation>
    <scope>SYNTHESIS OF 3515-3550</scope>
    <scope>POSSIBLE CANDIDATE MALARIA EPITOPE</scope>
</reference>
<comment type="function">
    <text evidence="2">Acts as a motor for the intracellular retrograde motility of vesicles and organelles along microtubules. Dynein has ATPase activity; the force-producing power stroke is thought to occur on release of ADP (By similarity).</text>
</comment>
<comment type="subunit">
    <text evidence="2">Consists of at least two heavy chains and a number of intermediate and light chains.</text>
</comment>
<comment type="subcellular location">
    <subcellularLocation>
        <location evidence="1">Cytoplasm</location>
        <location evidence="1">Cytoskeleton</location>
    </subcellularLocation>
</comment>
<comment type="domain">
    <text evidence="2">Dynein heavy chains probably consist of an N-terminal stem (which binds cargo and interacts with other dynein components), and the head or motor domain. The motor contains six tandemly-linked AAA domains in the head, which form a ring. A stalk-like structure (formed by two of the coiled coil domains) protrudes between AAA 4 and AAA 5 and terminates in a microtubule-binding site. A seventh domain may also contribute to this ring; it is not clear whether the N-terminus or the C-terminus forms this extra domain. There are four well-conserved and two non-conserved ATPase sites, one per AAA domain. Probably only one of these (within AAA 1) actually hydrolyzes ATP, the others may serve a regulatory function.</text>
</comment>
<comment type="biotechnology">
    <text evidence="6">Possible candidate for an effective malaria vaccine as determined by epitope response in sera.</text>
</comment>
<comment type="similarity">
    <text evidence="3">Belongs to the dynein heavy chain family.</text>
</comment>
<protein>
    <recommendedName>
        <fullName evidence="7">Dynein heavy chain-like protein 2</fullName>
    </recommendedName>
</protein>
<proteinExistence type="evidence at protein level"/>
<accession>Q8IID4</accession>
<accession>A0A143ZYP5</accession>
<feature type="chain" id="PRO_0000370750" description="Dynein heavy chain-like protein 2">
    <location>
        <begin position="1"/>
        <end position="5251"/>
    </location>
</feature>
<feature type="repeat" description="Kelch 1" evidence="3">
    <location>
        <begin position="37"/>
        <end position="87"/>
    </location>
</feature>
<feature type="repeat" description="Kelch 2" evidence="3">
    <location>
        <begin position="95"/>
        <end position="143"/>
    </location>
</feature>
<feature type="repeat" description="Kelch 3" evidence="3">
    <location>
        <begin position="266"/>
        <end position="317"/>
    </location>
</feature>
<feature type="repeat" description="Kelch 4" evidence="3">
    <location>
        <begin position="318"/>
        <end position="367"/>
    </location>
</feature>
<feature type="repeat" description="Kelch 5" evidence="3">
    <location>
        <begin position="372"/>
        <end position="421"/>
    </location>
</feature>
<feature type="repeat" description="Kelch 6" evidence="3">
    <location>
        <begin position="1639"/>
        <end position="1685"/>
    </location>
</feature>
<feature type="repeat" description="Kelch 7" evidence="3">
    <location>
        <begin position="2447"/>
        <end position="2494"/>
    </location>
</feature>
<feature type="region of interest" description="Disordered" evidence="5">
    <location>
        <begin position="140"/>
        <end position="188"/>
    </location>
</feature>
<feature type="region of interest" description="Disordered" evidence="5">
    <location>
        <begin position="686"/>
        <end position="732"/>
    </location>
</feature>
<feature type="region of interest" description="Disordered" evidence="5">
    <location>
        <begin position="1554"/>
        <end position="1598"/>
    </location>
</feature>
<feature type="region of interest" description="Disordered" evidence="5">
    <location>
        <begin position="1802"/>
        <end position="1825"/>
    </location>
</feature>
<feature type="region of interest" description="Disordered" evidence="5">
    <location>
        <begin position="2152"/>
        <end position="2171"/>
    </location>
</feature>
<feature type="region of interest" description="Disordered" evidence="5">
    <location>
        <begin position="3138"/>
        <end position="3163"/>
    </location>
</feature>
<feature type="region of interest" description="Disordered" evidence="5">
    <location>
        <begin position="3652"/>
        <end position="3686"/>
    </location>
</feature>
<feature type="region of interest" description="Disordered" evidence="5">
    <location>
        <begin position="4042"/>
        <end position="4250"/>
    </location>
</feature>
<feature type="region of interest" description="Disordered" evidence="5">
    <location>
        <begin position="4280"/>
        <end position="4299"/>
    </location>
</feature>
<feature type="region of interest" description="Disordered" evidence="5">
    <location>
        <begin position="4773"/>
        <end position="4824"/>
    </location>
</feature>
<feature type="region of interest" description="Disordered" evidence="5">
    <location>
        <begin position="4910"/>
        <end position="4948"/>
    </location>
</feature>
<feature type="coiled-coil region" evidence="3">
    <location>
        <begin position="1155"/>
        <end position="1225"/>
    </location>
</feature>
<feature type="coiled-coil region" evidence="3">
    <location>
        <begin position="1544"/>
        <end position="1610"/>
    </location>
</feature>
<feature type="coiled-coil region" evidence="3">
    <location>
        <begin position="2136"/>
        <end position="2188"/>
    </location>
</feature>
<feature type="compositionally biased region" description="Low complexity" evidence="5">
    <location>
        <begin position="692"/>
        <end position="730"/>
    </location>
</feature>
<feature type="compositionally biased region" description="Basic and acidic residues" evidence="5">
    <location>
        <begin position="1567"/>
        <end position="1583"/>
    </location>
</feature>
<feature type="compositionally biased region" description="Low complexity" evidence="5">
    <location>
        <begin position="1810"/>
        <end position="1825"/>
    </location>
</feature>
<feature type="compositionally biased region" description="Low complexity" evidence="5">
    <location>
        <begin position="3138"/>
        <end position="3154"/>
    </location>
</feature>
<feature type="compositionally biased region" description="Low complexity" evidence="5">
    <location>
        <begin position="3652"/>
        <end position="3671"/>
    </location>
</feature>
<feature type="compositionally biased region" description="Acidic residues" evidence="5">
    <location>
        <begin position="4059"/>
        <end position="4086"/>
    </location>
</feature>
<feature type="compositionally biased region" description="Basic and acidic residues" evidence="5">
    <location>
        <begin position="4087"/>
        <end position="4247"/>
    </location>
</feature>
<feature type="compositionally biased region" description="Acidic residues" evidence="5">
    <location>
        <begin position="4289"/>
        <end position="4299"/>
    </location>
</feature>
<feature type="compositionally biased region" description="Acidic residues" evidence="5">
    <location>
        <begin position="4807"/>
        <end position="4823"/>
    </location>
</feature>
<feature type="compositionally biased region" description="Basic and acidic residues" evidence="5">
    <location>
        <begin position="4912"/>
        <end position="4937"/>
    </location>
</feature>
<feature type="binding site" evidence="4">
    <location>
        <begin position="1895"/>
        <end position="1902"/>
    </location>
    <ligand>
        <name>ATP</name>
        <dbReference type="ChEBI" id="CHEBI:30616"/>
    </ligand>
</feature>
<feature type="binding site" evidence="4">
    <location>
        <begin position="2224"/>
        <end position="2231"/>
    </location>
    <ligand>
        <name>ATP</name>
        <dbReference type="ChEBI" id="CHEBI:30616"/>
    </ligand>
</feature>
<feature type="binding site" evidence="4">
    <location>
        <begin position="2546"/>
        <end position="2553"/>
    </location>
    <ligand>
        <name>ATP</name>
        <dbReference type="ChEBI" id="CHEBI:30616"/>
    </ligand>
</feature>
<feature type="binding site" evidence="4">
    <location>
        <begin position="2890"/>
        <end position="2897"/>
    </location>
    <ligand>
        <name>ATP</name>
        <dbReference type="ChEBI" id="CHEBI:30616"/>
    </ligand>
</feature>
<organism>
    <name type="scientific">Plasmodium falciparum (isolate 3D7)</name>
    <dbReference type="NCBI Taxonomy" id="36329"/>
    <lineage>
        <taxon>Eukaryota</taxon>
        <taxon>Sar</taxon>
        <taxon>Alveolata</taxon>
        <taxon>Apicomplexa</taxon>
        <taxon>Aconoidasida</taxon>
        <taxon>Haemosporida</taxon>
        <taxon>Plasmodiidae</taxon>
        <taxon>Plasmodium</taxon>
        <taxon>Plasmodium (Laverania)</taxon>
    </lineage>
</organism>
<dbReference type="EMBL" id="LN999945">
    <property type="protein sequence ID" value="CZT98891.1"/>
    <property type="molecule type" value="Genomic_DNA"/>
</dbReference>
<dbReference type="RefSeq" id="XP_001347911.1">
    <property type="nucleotide sequence ID" value="XM_001347875.1"/>
</dbReference>
<dbReference type="SMR" id="Q8IID4"/>
<dbReference type="STRING" id="36329.Q8IID4"/>
<dbReference type="PaxDb" id="5833-PF11_0240"/>
<dbReference type="EnsemblProtists" id="CZT98891">
    <property type="protein sequence ID" value="CZT98891"/>
    <property type="gene ID" value="PF3D7_1122900"/>
</dbReference>
<dbReference type="GeneID" id="810787"/>
<dbReference type="KEGG" id="pfa:PF3D7_1122900"/>
<dbReference type="VEuPathDB" id="PlasmoDB:PF3D7_1122900"/>
<dbReference type="HOGENOM" id="CLU_000038_2_0_1"/>
<dbReference type="OMA" id="WAYLVND"/>
<dbReference type="OrthoDB" id="424310at2759"/>
<dbReference type="PhylomeDB" id="Q8IID4"/>
<dbReference type="Proteomes" id="UP000001450">
    <property type="component" value="Chromosome 11"/>
</dbReference>
<dbReference type="GO" id="GO:0097729">
    <property type="term" value="C:9+2 motile cilium"/>
    <property type="evidence" value="ECO:0000318"/>
    <property type="project" value="GO_Central"/>
</dbReference>
<dbReference type="GO" id="GO:0005930">
    <property type="term" value="C:axoneme"/>
    <property type="evidence" value="ECO:0000318"/>
    <property type="project" value="GO_Central"/>
</dbReference>
<dbReference type="GO" id="GO:0030286">
    <property type="term" value="C:dynein complex"/>
    <property type="evidence" value="ECO:0000250"/>
    <property type="project" value="GeneDB"/>
</dbReference>
<dbReference type="GO" id="GO:0005874">
    <property type="term" value="C:microtubule"/>
    <property type="evidence" value="ECO:0007669"/>
    <property type="project" value="UniProtKB-KW"/>
</dbReference>
<dbReference type="GO" id="GO:0005875">
    <property type="term" value="C:microtubule associated complex"/>
    <property type="evidence" value="ECO:0000250"/>
    <property type="project" value="UniProtKB"/>
</dbReference>
<dbReference type="GO" id="GO:0005524">
    <property type="term" value="F:ATP binding"/>
    <property type="evidence" value="ECO:0007669"/>
    <property type="project" value="UniProtKB-KW"/>
</dbReference>
<dbReference type="GO" id="GO:0016887">
    <property type="term" value="F:ATP hydrolysis activity"/>
    <property type="evidence" value="ECO:0007669"/>
    <property type="project" value="InterPro"/>
</dbReference>
<dbReference type="GO" id="GO:0003774">
    <property type="term" value="F:cytoskeletal motor activity"/>
    <property type="evidence" value="ECO:0000250"/>
    <property type="project" value="GeneDB"/>
</dbReference>
<dbReference type="GO" id="GO:0045505">
    <property type="term" value="F:dynein intermediate chain binding"/>
    <property type="evidence" value="ECO:0000318"/>
    <property type="project" value="GO_Central"/>
</dbReference>
<dbReference type="GO" id="GO:0051959">
    <property type="term" value="F:dynein light intermediate chain binding"/>
    <property type="evidence" value="ECO:0000318"/>
    <property type="project" value="GO_Central"/>
</dbReference>
<dbReference type="GO" id="GO:0003777">
    <property type="term" value="F:microtubule motor activity"/>
    <property type="evidence" value="ECO:0000250"/>
    <property type="project" value="UniProtKB"/>
</dbReference>
<dbReference type="GO" id="GO:0008569">
    <property type="term" value="F:minus-end-directed microtubule motor activity"/>
    <property type="evidence" value="ECO:0000318"/>
    <property type="project" value="GO_Central"/>
</dbReference>
<dbReference type="GO" id="GO:0060294">
    <property type="term" value="P:cilium movement involved in cell motility"/>
    <property type="evidence" value="ECO:0000318"/>
    <property type="project" value="GO_Central"/>
</dbReference>
<dbReference type="GO" id="GO:0007018">
    <property type="term" value="P:microtubule-based movement"/>
    <property type="evidence" value="ECO:0000250"/>
    <property type="project" value="UniProtKB"/>
</dbReference>
<dbReference type="FunFam" id="3.40.50.300:FF:000738">
    <property type="entry name" value="Dynein heavy chain axonemal"/>
    <property type="match status" value="1"/>
</dbReference>
<dbReference type="FunFam" id="1.10.8.1220:FF:000014">
    <property type="entry name" value="Dynein heavy chain, putative"/>
    <property type="match status" value="1"/>
</dbReference>
<dbReference type="FunFam" id="1.20.920.20:FF:000012">
    <property type="entry name" value="Dynein heavy chain, putative"/>
    <property type="match status" value="1"/>
</dbReference>
<dbReference type="FunFam" id="3.40.50.300:FF:001265">
    <property type="entry name" value="Dynein heavy chain, putative"/>
    <property type="match status" value="1"/>
</dbReference>
<dbReference type="FunFam" id="3.40.50.300:FF:001275">
    <property type="entry name" value="Dynein heavy chain, putative"/>
    <property type="match status" value="1"/>
</dbReference>
<dbReference type="FunFam" id="1.10.8.720:FF:000012">
    <property type="entry name" value="Dynein heavy chain-like protein"/>
    <property type="match status" value="1"/>
</dbReference>
<dbReference type="FunFam" id="1.20.1270.280:FF:000012">
    <property type="entry name" value="Dynein heavy chain-like protein"/>
    <property type="match status" value="1"/>
</dbReference>
<dbReference type="FunFam" id="1.20.140.100:FF:000011">
    <property type="entry name" value="Dynein heavy chain-like protein"/>
    <property type="match status" value="1"/>
</dbReference>
<dbReference type="FunFam" id="2.120.10.80:FF:000092">
    <property type="entry name" value="Dynein heavy chain-like protein"/>
    <property type="match status" value="1"/>
</dbReference>
<dbReference type="FunFam" id="3.40.50.300:FF:001844">
    <property type="entry name" value="Dynein heavy chain-like protein"/>
    <property type="match status" value="1"/>
</dbReference>
<dbReference type="FunFam" id="1.10.8.710:FF:000007">
    <property type="entry name" value="Putative dynein heavy chain"/>
    <property type="match status" value="1"/>
</dbReference>
<dbReference type="Gene3D" id="1.10.472.130">
    <property type="match status" value="1"/>
</dbReference>
<dbReference type="Gene3D" id="1.10.8.1220">
    <property type="match status" value="1"/>
</dbReference>
<dbReference type="Gene3D" id="1.10.8.710">
    <property type="match status" value="1"/>
</dbReference>
<dbReference type="Gene3D" id="1.20.1270.280">
    <property type="match status" value="1"/>
</dbReference>
<dbReference type="Gene3D" id="1.20.58.1120">
    <property type="match status" value="1"/>
</dbReference>
<dbReference type="Gene3D" id="1.20.920.20">
    <property type="match status" value="1"/>
</dbReference>
<dbReference type="Gene3D" id="1.20.920.30">
    <property type="match status" value="1"/>
</dbReference>
<dbReference type="Gene3D" id="3.10.490.20">
    <property type="match status" value="1"/>
</dbReference>
<dbReference type="Gene3D" id="1.20.140.100">
    <property type="entry name" value="Dynein heavy chain, N-terminal domain 2"/>
    <property type="match status" value="1"/>
</dbReference>
<dbReference type="Gene3D" id="3.20.180.20">
    <property type="entry name" value="Dynein heavy chain, N-terminal domain 2"/>
    <property type="match status" value="1"/>
</dbReference>
<dbReference type="Gene3D" id="2.120.10.80">
    <property type="entry name" value="Kelch-type beta propeller"/>
    <property type="match status" value="2"/>
</dbReference>
<dbReference type="Gene3D" id="3.40.50.300">
    <property type="entry name" value="P-loop containing nucleotide triphosphate hydrolases"/>
    <property type="match status" value="5"/>
</dbReference>
<dbReference type="Gene3D" id="1.10.8.720">
    <property type="entry name" value="Region D6 of dynein motor"/>
    <property type="match status" value="1"/>
</dbReference>
<dbReference type="InterPro" id="IPR003593">
    <property type="entry name" value="AAA+_ATPase"/>
</dbReference>
<dbReference type="InterPro" id="IPR035699">
    <property type="entry name" value="AAA_6"/>
</dbReference>
<dbReference type="InterPro" id="IPR041658">
    <property type="entry name" value="AAA_lid_11"/>
</dbReference>
<dbReference type="InterPro" id="IPR042219">
    <property type="entry name" value="AAA_lid_11_sf"/>
</dbReference>
<dbReference type="InterPro" id="IPR011704">
    <property type="entry name" value="ATPase_dyneun-rel_AAA"/>
</dbReference>
<dbReference type="InterPro" id="IPR026983">
    <property type="entry name" value="DHC"/>
</dbReference>
<dbReference type="InterPro" id="IPR041589">
    <property type="entry name" value="DNAH3_AAA_lid_1"/>
</dbReference>
<dbReference type="InterPro" id="IPR042222">
    <property type="entry name" value="Dynein_2_N"/>
</dbReference>
<dbReference type="InterPro" id="IPR043157">
    <property type="entry name" value="Dynein_AAA1S"/>
</dbReference>
<dbReference type="InterPro" id="IPR041466">
    <property type="entry name" value="Dynein_AAA5_ext"/>
</dbReference>
<dbReference type="InterPro" id="IPR041228">
    <property type="entry name" value="Dynein_C"/>
</dbReference>
<dbReference type="InterPro" id="IPR043160">
    <property type="entry name" value="Dynein_C_barrel"/>
</dbReference>
<dbReference type="InterPro" id="IPR024743">
    <property type="entry name" value="Dynein_HC_stalk"/>
</dbReference>
<dbReference type="InterPro" id="IPR024317">
    <property type="entry name" value="Dynein_heavy_chain_D4_dom"/>
</dbReference>
<dbReference type="InterPro" id="IPR004273">
    <property type="entry name" value="Dynein_heavy_D6_P-loop"/>
</dbReference>
<dbReference type="InterPro" id="IPR013602">
    <property type="entry name" value="Dynein_heavy_linker"/>
</dbReference>
<dbReference type="InterPro" id="IPR042228">
    <property type="entry name" value="Dynein_linker_3"/>
</dbReference>
<dbReference type="InterPro" id="IPR014756">
    <property type="entry name" value="Ig_E-set"/>
</dbReference>
<dbReference type="InterPro" id="IPR015915">
    <property type="entry name" value="Kelch-typ_b-propeller"/>
</dbReference>
<dbReference type="InterPro" id="IPR027417">
    <property type="entry name" value="P-loop_NTPase"/>
</dbReference>
<dbReference type="PANTHER" id="PTHR10676">
    <property type="entry name" value="DYNEIN HEAVY CHAIN FAMILY PROTEIN"/>
    <property type="match status" value="1"/>
</dbReference>
<dbReference type="PANTHER" id="PTHR10676:SF392">
    <property type="entry name" value="DYNEIN HEAVY CHAIN-LIKE PROTEIN 2"/>
    <property type="match status" value="1"/>
</dbReference>
<dbReference type="Pfam" id="PF07728">
    <property type="entry name" value="AAA_5"/>
    <property type="match status" value="1"/>
</dbReference>
<dbReference type="Pfam" id="PF12774">
    <property type="entry name" value="AAA_6"/>
    <property type="match status" value="1"/>
</dbReference>
<dbReference type="Pfam" id="PF12775">
    <property type="entry name" value="AAA_7"/>
    <property type="match status" value="1"/>
</dbReference>
<dbReference type="Pfam" id="PF12780">
    <property type="entry name" value="AAA_8"/>
    <property type="match status" value="1"/>
</dbReference>
<dbReference type="Pfam" id="PF17857">
    <property type="entry name" value="AAA_lid_1"/>
    <property type="match status" value="1"/>
</dbReference>
<dbReference type="Pfam" id="PF18198">
    <property type="entry name" value="AAA_lid_11"/>
    <property type="match status" value="1"/>
</dbReference>
<dbReference type="Pfam" id="PF08393">
    <property type="entry name" value="DHC_N2"/>
    <property type="match status" value="1"/>
</dbReference>
<dbReference type="Pfam" id="PF17852">
    <property type="entry name" value="Dynein_AAA_lid"/>
    <property type="match status" value="1"/>
</dbReference>
<dbReference type="Pfam" id="PF18199">
    <property type="entry name" value="Dynein_C"/>
    <property type="match status" value="1"/>
</dbReference>
<dbReference type="Pfam" id="PF03028">
    <property type="entry name" value="Dynein_heavy"/>
    <property type="match status" value="1"/>
</dbReference>
<dbReference type="Pfam" id="PF24681">
    <property type="entry name" value="Kelch_KLHDC2_KLHL20_DRC7"/>
    <property type="match status" value="1"/>
</dbReference>
<dbReference type="Pfam" id="PF12777">
    <property type="entry name" value="MT"/>
    <property type="match status" value="1"/>
</dbReference>
<dbReference type="SMART" id="SM00382">
    <property type="entry name" value="AAA"/>
    <property type="match status" value="3"/>
</dbReference>
<dbReference type="SUPFAM" id="SSF81296">
    <property type="entry name" value="E set domains"/>
    <property type="match status" value="1"/>
</dbReference>
<dbReference type="SUPFAM" id="SSF117281">
    <property type="entry name" value="Kelch motif"/>
    <property type="match status" value="2"/>
</dbReference>
<dbReference type="SUPFAM" id="SSF52540">
    <property type="entry name" value="P-loop containing nucleoside triphosphate hydrolases"/>
    <property type="match status" value="4"/>
</dbReference>